<keyword id="KW-1185">Reference proteome</keyword>
<keyword id="KW-0677">Repeat</keyword>
<keyword id="KW-0732">Signal</keyword>
<keyword id="KW-0843">Virulence</keyword>
<protein>
    <recommendedName>
        <fullName evidence="6">Secreted LysM effector Vd2LysM</fullName>
    </recommendedName>
    <alternativeName>
        <fullName evidence="6">LysM domain-containing protein Vd2LysM</fullName>
    </alternativeName>
    <alternativeName>
        <fullName evidence="6">Two LysM domain-containing protein</fullName>
    </alternativeName>
</protein>
<evidence type="ECO:0000250" key="1">
    <source>
        <dbReference type="UniProtKB" id="H1UVH3"/>
    </source>
</evidence>
<evidence type="ECO:0000255" key="2"/>
<evidence type="ECO:0000255" key="3">
    <source>
        <dbReference type="PROSITE-ProRule" id="PRU01118"/>
    </source>
</evidence>
<evidence type="ECO:0000269" key="4">
    <source>
    </source>
</evidence>
<evidence type="ECO:0000269" key="5">
    <source>
    </source>
</evidence>
<evidence type="ECO:0000303" key="6">
    <source>
    </source>
</evidence>
<evidence type="ECO:0000305" key="7"/>
<reference key="1">
    <citation type="journal article" date="2011" name="PLoS Pathog.">
        <title>Comparative genomics yields insights into niche adaptation of plant vascular wilt pathogens.</title>
        <authorList>
            <person name="Klosterman S.J."/>
            <person name="Subbarao K.V."/>
            <person name="Kang S."/>
            <person name="Veronese P."/>
            <person name="Gold S.E."/>
            <person name="Thomma B.P.H.J."/>
            <person name="Chen Z."/>
            <person name="Henrissat B."/>
            <person name="Lee Y.-H."/>
            <person name="Park J."/>
            <person name="Garcia-Pedrajas M.D."/>
            <person name="Barbara D.J."/>
            <person name="Anchieta A."/>
            <person name="de Jonge R."/>
            <person name="Santhanam P."/>
            <person name="Maruthachalam K."/>
            <person name="Atallah Z."/>
            <person name="Amyotte S.G."/>
            <person name="Paz Z."/>
            <person name="Inderbitzin P."/>
            <person name="Hayes R.J."/>
            <person name="Heiman D.I."/>
            <person name="Young S."/>
            <person name="Zeng Q."/>
            <person name="Engels R."/>
            <person name="Galagan J."/>
            <person name="Cuomo C.A."/>
            <person name="Dobinson K.F."/>
            <person name="Ma L.-J."/>
        </authorList>
    </citation>
    <scope>NUCLEOTIDE SEQUENCE [LARGE SCALE GENOMIC DNA]</scope>
    <source>
        <strain>VdLs.17 / ATCC MYA-4575 / FGSC 10137</strain>
    </source>
</reference>
<reference key="2">
    <citation type="journal article" date="2013" name="Genome Res.">
        <title>Extensive chromosomal reshuffling drives evolution of virulence in an asexual pathogen.</title>
        <authorList>
            <person name="de Jonge R."/>
            <person name="Bolton M.D."/>
            <person name="Kombrink A."/>
            <person name="van den Berg G.C."/>
            <person name="Yadeta K.A."/>
            <person name="Thomma B.P."/>
        </authorList>
    </citation>
    <scope>FUNCTION</scope>
    <scope>DOMAIN</scope>
    <scope>INDUCTION</scope>
    <scope>DISRUPTION PHENOTYPE</scope>
</reference>
<reference key="3">
    <citation type="journal article" date="2017" name="Mol. Plant Pathol.">
        <title>Verticillium dahliae LysM effectors differentially contribute to virulence on plant hosts.</title>
        <authorList>
            <person name="Kombrink A."/>
            <person name="Rovenich H."/>
            <person name="Shi-Kunne X."/>
            <person name="Rojas-Padilla E."/>
            <person name="van den Berg G.C."/>
            <person name="Domazakis E."/>
            <person name="de Jonge R."/>
            <person name="Valkenburg D.J."/>
            <person name="Sanchez-Vallet A."/>
            <person name="Seidl M.F."/>
            <person name="Thomma B.P."/>
        </authorList>
    </citation>
    <scope>FUNCTION</scope>
    <scope>DOMAIN</scope>
    <scope>DISRUPTION PHENOTYPE</scope>
    <scope>CHITIN-BINDING</scope>
</reference>
<accession>G2X4U8</accession>
<proteinExistence type="evidence at protein level"/>
<feature type="signal peptide" evidence="2">
    <location>
        <begin position="1"/>
        <end position="18"/>
    </location>
</feature>
<feature type="chain" id="PRO_5003439108" description="Secreted LysM effector Vd2LysM">
    <location>
        <begin position="19"/>
        <end position="145"/>
    </location>
</feature>
<feature type="domain" description="LysM 1" evidence="3">
    <location>
        <begin position="31"/>
        <end position="75"/>
    </location>
</feature>
<feature type="domain" description="LysM 2" evidence="3">
    <location>
        <begin position="96"/>
        <end position="140"/>
    </location>
</feature>
<name>LYSM2_VERDV</name>
<sequence>MRPDVFVLFTAFLGPAAAYRRTCSHTGKGEGWYIIRRGDNFNAVAADFCTSTNVLTEWNHISTITDNMVNTKIKVPCRWNAGKQRDCLKDQKSSNGWYHIVSGDELKDIAYDFCTTSGSLAGMNGISNPDYIKANTDIVVPCSWN</sequence>
<organism>
    <name type="scientific">Verticillium dahliae (strain VdLs.17 / ATCC MYA-4575 / FGSC 10137)</name>
    <name type="common">Verticillium wilt</name>
    <dbReference type="NCBI Taxonomy" id="498257"/>
    <lineage>
        <taxon>Eukaryota</taxon>
        <taxon>Fungi</taxon>
        <taxon>Dikarya</taxon>
        <taxon>Ascomycota</taxon>
        <taxon>Pezizomycotina</taxon>
        <taxon>Sordariomycetes</taxon>
        <taxon>Hypocreomycetidae</taxon>
        <taxon>Glomerellales</taxon>
        <taxon>Plectosphaerellaceae</taxon>
        <taxon>Verticillium</taxon>
    </lineage>
</organism>
<gene>
    <name evidence="6" type="primary">Vd2LysM</name>
    <name type="ORF">VDAG_05180</name>
</gene>
<comment type="function">
    <text evidence="1 4 5">Secreted effector that enables the plant pathogenic fungus to manipulate host defenses for successful infection (PubMed:23685541, PubMed:27911046). Binds chitin, suppresses chitin-induced immune responses and protects hyphae against degradation by plant hydrolytic enzymes (PubMed:27911046). Chitin-induced polymerization of homodimers forms a contiguous ELP2 highly oligomeric super-complexe that may precipitate at infection sites to eliminate chitin oligomers, and thus suppress the activation of chitin-induced plant immunity (By similarity).</text>
</comment>
<comment type="subunit">
    <text evidence="1">Forms homodimers in a chitin-independent manner through interactions at the N-termini of EPL2 monomers (By similarity). Homodimers are further polymerized in a chitin-dependent manner (By similarity).</text>
</comment>
<comment type="induction">
    <text evidence="4">Expressed during plant infection.</text>
</comment>
<comment type="domain">
    <text evidence="4 5">The LysM (lysin motif) domains are small globular domains involved in binding chitin in eukaryotes. Vd2LysM contains 2 LysM domains.</text>
</comment>
<comment type="disruption phenotype">
    <text evidence="4 5">Shows significantly reduced virulence on inoculation on tomato but not N.benthamiana nor Arabidopsis plants (PubMed:23685541, PubMed:27911046). Seems to leads to enhanced colonization on Arabidopsis (PubMed:27911046).</text>
</comment>
<comment type="miscellaneous">
    <text evidence="7">In plants, chitin acts as a microbe-associated molecular pattern (MAMP) that is recognized by lysin motif (LysM)-containing plant cell surface-localized pattern recognition receptors (PRRs) that activate a plethora of downstream immune responses.</text>
</comment>
<comment type="similarity">
    <text evidence="7">Belongs to the secreted LysM effector family.</text>
</comment>
<dbReference type="EMBL" id="DS572703">
    <property type="protein sequence ID" value="EGY23742.1"/>
    <property type="molecule type" value="Genomic_DNA"/>
</dbReference>
<dbReference type="RefSeq" id="XP_009653211.1">
    <property type="nucleotide sequence ID" value="XM_009654916.1"/>
</dbReference>
<dbReference type="SMR" id="G2X4U8"/>
<dbReference type="STRING" id="498257.G2X4U8"/>
<dbReference type="EnsemblFungi" id="EGY23742">
    <property type="protein sequence ID" value="EGY23742"/>
    <property type="gene ID" value="VDAG_05180"/>
</dbReference>
<dbReference type="GeneID" id="20706643"/>
<dbReference type="KEGG" id="vda:VDAG_05180"/>
<dbReference type="eggNOG" id="ENOG502SS8R">
    <property type="taxonomic scope" value="Eukaryota"/>
</dbReference>
<dbReference type="HOGENOM" id="CLU_149482_0_0_1"/>
<dbReference type="InParanoid" id="G2X4U8"/>
<dbReference type="OMA" id="WVIQVPC"/>
<dbReference type="OrthoDB" id="1042at1028384"/>
<dbReference type="PHI-base" id="PHI:6834"/>
<dbReference type="Proteomes" id="UP000001611">
    <property type="component" value="Chromosome 4"/>
</dbReference>
<dbReference type="CDD" id="cd00118">
    <property type="entry name" value="LysM"/>
    <property type="match status" value="2"/>
</dbReference>
<dbReference type="Gene3D" id="3.10.350.10">
    <property type="entry name" value="LysM domain"/>
    <property type="match status" value="2"/>
</dbReference>
<dbReference type="InterPro" id="IPR018392">
    <property type="entry name" value="LysM_dom"/>
</dbReference>
<dbReference type="InterPro" id="IPR036779">
    <property type="entry name" value="LysM_dom_sf"/>
</dbReference>
<dbReference type="Pfam" id="PF01476">
    <property type="entry name" value="LysM"/>
    <property type="match status" value="2"/>
</dbReference>
<dbReference type="SMART" id="SM00257">
    <property type="entry name" value="LysM"/>
    <property type="match status" value="2"/>
</dbReference>
<dbReference type="SUPFAM" id="SSF54106">
    <property type="entry name" value="LysM domain"/>
    <property type="match status" value="2"/>
</dbReference>
<dbReference type="PROSITE" id="PS51782">
    <property type="entry name" value="LYSM"/>
    <property type="match status" value="2"/>
</dbReference>